<keyword id="KW-1003">Cell membrane</keyword>
<keyword id="KW-0472">Membrane</keyword>
<keyword id="KW-0520">NAD</keyword>
<keyword id="KW-0874">Quinone</keyword>
<keyword id="KW-1278">Translocase</keyword>
<keyword id="KW-0812">Transmembrane</keyword>
<keyword id="KW-1133">Transmembrane helix</keyword>
<keyword id="KW-0813">Transport</keyword>
<name>NUOK_BACC7</name>
<sequence length="104" mass="11074">MSSVPASAYLTLAIILFCIGLFGALTKRNTVIVLVCIELMLNAVNLNLVAFSKLGLFPNVTGQIFSLFTMAVAAAEAAVGLAILIALYRNRTTVHVDEMDTLKG</sequence>
<proteinExistence type="inferred from homology"/>
<protein>
    <recommendedName>
        <fullName evidence="1">NADH-quinone oxidoreductase subunit K</fullName>
        <ecNumber evidence="1">7.1.1.-</ecNumber>
    </recommendedName>
    <alternativeName>
        <fullName evidence="1">NADH dehydrogenase I subunit K</fullName>
    </alternativeName>
    <alternativeName>
        <fullName evidence="1">NDH-1 subunit K</fullName>
    </alternativeName>
</protein>
<accession>B7HY51</accession>
<organism>
    <name type="scientific">Bacillus cereus (strain AH187)</name>
    <dbReference type="NCBI Taxonomy" id="405534"/>
    <lineage>
        <taxon>Bacteria</taxon>
        <taxon>Bacillati</taxon>
        <taxon>Bacillota</taxon>
        <taxon>Bacilli</taxon>
        <taxon>Bacillales</taxon>
        <taxon>Bacillaceae</taxon>
        <taxon>Bacillus</taxon>
        <taxon>Bacillus cereus group</taxon>
    </lineage>
</organism>
<gene>
    <name evidence="1" type="primary">nuoK</name>
    <name type="ordered locus">BCAH187_A5469</name>
</gene>
<evidence type="ECO:0000255" key="1">
    <source>
        <dbReference type="HAMAP-Rule" id="MF_01456"/>
    </source>
</evidence>
<reference key="1">
    <citation type="submission" date="2008-10" db="EMBL/GenBank/DDBJ databases">
        <title>Genome sequence of Bacillus cereus AH187.</title>
        <authorList>
            <person name="Dodson R.J."/>
            <person name="Durkin A.S."/>
            <person name="Rosovitz M.J."/>
            <person name="Rasko D.A."/>
            <person name="Kolsto A.B."/>
            <person name="Okstad O.A."/>
            <person name="Ravel J."/>
            <person name="Sutton G."/>
        </authorList>
    </citation>
    <scope>NUCLEOTIDE SEQUENCE [LARGE SCALE GENOMIC DNA]</scope>
    <source>
        <strain>AH187</strain>
    </source>
</reference>
<comment type="function">
    <text evidence="1">NDH-1 shuttles electrons from NADH, via FMN and iron-sulfur (Fe-S) centers, to quinones in the respiratory chain. The immediate electron acceptor for the enzyme in this species is believed to be a menaquinone. Couples the redox reaction to proton translocation (for every two electrons transferred, four hydrogen ions are translocated across the cytoplasmic membrane), and thus conserves the redox energy in a proton gradient.</text>
</comment>
<comment type="catalytic activity">
    <reaction evidence="1">
        <text>a quinone + NADH + 5 H(+)(in) = a quinol + NAD(+) + 4 H(+)(out)</text>
        <dbReference type="Rhea" id="RHEA:57888"/>
        <dbReference type="ChEBI" id="CHEBI:15378"/>
        <dbReference type="ChEBI" id="CHEBI:24646"/>
        <dbReference type="ChEBI" id="CHEBI:57540"/>
        <dbReference type="ChEBI" id="CHEBI:57945"/>
        <dbReference type="ChEBI" id="CHEBI:132124"/>
    </reaction>
</comment>
<comment type="subunit">
    <text evidence="1">NDH-1 is composed of 14 different subunits. Subunits NuoA, H, J, K, L, M, N constitute the membrane sector of the complex.</text>
</comment>
<comment type="subcellular location">
    <subcellularLocation>
        <location evidence="1">Cell membrane</location>
        <topology evidence="1">Multi-pass membrane protein</topology>
    </subcellularLocation>
</comment>
<comment type="similarity">
    <text evidence="1">Belongs to the complex I subunit 4L family.</text>
</comment>
<feature type="chain" id="PRO_0000389941" description="NADH-quinone oxidoreductase subunit K">
    <location>
        <begin position="1"/>
        <end position="104"/>
    </location>
</feature>
<feature type="transmembrane region" description="Helical" evidence="1">
    <location>
        <begin position="4"/>
        <end position="24"/>
    </location>
</feature>
<feature type="transmembrane region" description="Helical" evidence="1">
    <location>
        <begin position="31"/>
        <end position="51"/>
    </location>
</feature>
<feature type="transmembrane region" description="Helical" evidence="1">
    <location>
        <begin position="67"/>
        <end position="87"/>
    </location>
</feature>
<dbReference type="EC" id="7.1.1.-" evidence="1"/>
<dbReference type="EMBL" id="CP001177">
    <property type="protein sequence ID" value="ACJ79354.1"/>
    <property type="molecule type" value="Genomic_DNA"/>
</dbReference>
<dbReference type="SMR" id="B7HY51"/>
<dbReference type="KEGG" id="bcr:BCAH187_A5469"/>
<dbReference type="HOGENOM" id="CLU_144724_0_0_9"/>
<dbReference type="Proteomes" id="UP000002214">
    <property type="component" value="Chromosome"/>
</dbReference>
<dbReference type="GO" id="GO:0030964">
    <property type="term" value="C:NADH dehydrogenase complex"/>
    <property type="evidence" value="ECO:0007669"/>
    <property type="project" value="TreeGrafter"/>
</dbReference>
<dbReference type="GO" id="GO:0005886">
    <property type="term" value="C:plasma membrane"/>
    <property type="evidence" value="ECO:0007669"/>
    <property type="project" value="UniProtKB-SubCell"/>
</dbReference>
<dbReference type="GO" id="GO:0050136">
    <property type="term" value="F:NADH:ubiquinone reductase (non-electrogenic) activity"/>
    <property type="evidence" value="ECO:0007669"/>
    <property type="project" value="UniProtKB-UniRule"/>
</dbReference>
<dbReference type="GO" id="GO:0048038">
    <property type="term" value="F:quinone binding"/>
    <property type="evidence" value="ECO:0007669"/>
    <property type="project" value="UniProtKB-KW"/>
</dbReference>
<dbReference type="GO" id="GO:0042773">
    <property type="term" value="P:ATP synthesis coupled electron transport"/>
    <property type="evidence" value="ECO:0007669"/>
    <property type="project" value="InterPro"/>
</dbReference>
<dbReference type="FunFam" id="1.10.287.3510:FF:000001">
    <property type="entry name" value="NADH-quinone oxidoreductase subunit K"/>
    <property type="match status" value="1"/>
</dbReference>
<dbReference type="Gene3D" id="1.10.287.3510">
    <property type="match status" value="1"/>
</dbReference>
<dbReference type="HAMAP" id="MF_01456">
    <property type="entry name" value="NDH1_NuoK"/>
    <property type="match status" value="1"/>
</dbReference>
<dbReference type="InterPro" id="IPR001133">
    <property type="entry name" value="NADH_UbQ_OxRdtase_chain4L/K"/>
</dbReference>
<dbReference type="InterPro" id="IPR039428">
    <property type="entry name" value="NUOK/Mnh_C1-like"/>
</dbReference>
<dbReference type="NCBIfam" id="NF004320">
    <property type="entry name" value="PRK05715.1-2"/>
    <property type="match status" value="1"/>
</dbReference>
<dbReference type="NCBIfam" id="NF004321">
    <property type="entry name" value="PRK05715.1-3"/>
    <property type="match status" value="1"/>
</dbReference>
<dbReference type="NCBIfam" id="NF004322">
    <property type="entry name" value="PRK05715.1-4"/>
    <property type="match status" value="1"/>
</dbReference>
<dbReference type="NCBIfam" id="NF004323">
    <property type="entry name" value="PRK05715.1-5"/>
    <property type="match status" value="1"/>
</dbReference>
<dbReference type="PANTHER" id="PTHR11434:SF16">
    <property type="entry name" value="NADH-UBIQUINONE OXIDOREDUCTASE CHAIN 4L"/>
    <property type="match status" value="1"/>
</dbReference>
<dbReference type="PANTHER" id="PTHR11434">
    <property type="entry name" value="NADH-UBIQUINONE OXIDOREDUCTASE SUBUNIT ND4L"/>
    <property type="match status" value="1"/>
</dbReference>
<dbReference type="Pfam" id="PF00420">
    <property type="entry name" value="Oxidored_q2"/>
    <property type="match status" value="1"/>
</dbReference>